<protein>
    <recommendedName>
        <fullName>Solute carrier family 12 member 7</fullName>
    </recommendedName>
    <alternativeName>
        <fullName>Electroneutral potassium-chloride cotransporter 4</fullName>
    </alternativeName>
    <alternativeName>
        <fullName>K-Cl cotransporter 4</fullName>
    </alternativeName>
</protein>
<organism>
    <name type="scientific">Mus musculus</name>
    <name type="common">Mouse</name>
    <dbReference type="NCBI Taxonomy" id="10090"/>
    <lineage>
        <taxon>Eukaryota</taxon>
        <taxon>Metazoa</taxon>
        <taxon>Chordata</taxon>
        <taxon>Craniata</taxon>
        <taxon>Vertebrata</taxon>
        <taxon>Euteleostomi</taxon>
        <taxon>Mammalia</taxon>
        <taxon>Eutheria</taxon>
        <taxon>Euarchontoglires</taxon>
        <taxon>Glires</taxon>
        <taxon>Rodentia</taxon>
        <taxon>Myomorpha</taxon>
        <taxon>Muroidea</taxon>
        <taxon>Muridae</taxon>
        <taxon>Murinae</taxon>
        <taxon>Mus</taxon>
        <taxon>Mus</taxon>
    </lineage>
</organism>
<keyword id="KW-0002">3D-structure</keyword>
<keyword id="KW-0025">Alternative splicing</keyword>
<keyword id="KW-1003">Cell membrane</keyword>
<keyword id="KW-0868">Chloride</keyword>
<keyword id="KW-0209">Deafness</keyword>
<keyword id="KW-0325">Glycoprotein</keyword>
<keyword id="KW-0406">Ion transport</keyword>
<keyword id="KW-0472">Membrane</keyword>
<keyword id="KW-0479">Metal-binding</keyword>
<keyword id="KW-0597">Phosphoprotein</keyword>
<keyword id="KW-0630">Potassium</keyword>
<keyword id="KW-0633">Potassium transport</keyword>
<keyword id="KW-1185">Reference proteome</keyword>
<keyword id="KW-0769">Symport</keyword>
<keyword id="KW-0812">Transmembrane</keyword>
<keyword id="KW-1133">Transmembrane helix</keyword>
<keyword id="KW-0813">Transport</keyword>
<evidence type="ECO:0000250" key="1">
    <source>
        <dbReference type="UniProtKB" id="Q9Y666"/>
    </source>
</evidence>
<evidence type="ECO:0000256" key="2">
    <source>
        <dbReference type="SAM" id="MobiDB-lite"/>
    </source>
</evidence>
<evidence type="ECO:0000269" key="3">
    <source>
    </source>
</evidence>
<evidence type="ECO:0000269" key="4">
    <source>
    </source>
</evidence>
<evidence type="ECO:0000269" key="5">
    <source>
    </source>
</evidence>
<evidence type="ECO:0000269" key="6">
    <source>
    </source>
</evidence>
<evidence type="ECO:0000269" key="7">
    <source>
    </source>
</evidence>
<evidence type="ECO:0000269" key="8">
    <source>
    </source>
</evidence>
<evidence type="ECO:0000269" key="9">
    <source>
    </source>
</evidence>
<evidence type="ECO:0000303" key="10">
    <source>
    </source>
</evidence>
<evidence type="ECO:0000303" key="11">
    <source>
    </source>
</evidence>
<evidence type="ECO:0000305" key="12"/>
<evidence type="ECO:0007744" key="13">
    <source>
    </source>
</evidence>
<evidence type="ECO:0007744" key="14">
    <source>
    </source>
</evidence>
<evidence type="ECO:0007744" key="15">
    <source>
    </source>
</evidence>
<proteinExistence type="evidence at protein level"/>
<reference key="1">
    <citation type="journal article" date="1999" name="J. Biol. Chem.">
        <title>Cloning and characterization of KCC3 and KCC4, new members of the cation-chloride cotransporter gene family.</title>
        <authorList>
            <person name="Mount D.B."/>
            <person name="Mercado A."/>
            <person name="Song L."/>
            <person name="Xu J."/>
            <person name="George A.L. Jr."/>
            <person name="Delpire E."/>
            <person name="Gamba G."/>
        </authorList>
    </citation>
    <scope>NUCLEOTIDE SEQUENCE [MRNA] (ISOFORM 1)</scope>
    <scope>TISSUE SPECIFICITY</scope>
</reference>
<reference key="2">
    <citation type="journal article" date="2004" name="DNA Res.">
        <title>Prediction of the coding sequences of mouse homologues of FLJ genes: the complete nucleotide sequences of 110 mouse FLJ-homologous cDNAs identified by screening of terminal sequences of cDNA clones randomly sampled from size-fractionated libraries.</title>
        <authorList>
            <person name="Okazaki N."/>
            <person name="Kikuno R."/>
            <person name="Ohara R."/>
            <person name="Inamoto S."/>
            <person name="Koseki H."/>
            <person name="Hiraoka S."/>
            <person name="Saga Y."/>
            <person name="Kitamura H."/>
            <person name="Nakagawa T."/>
            <person name="Nagase T."/>
            <person name="Ohara O."/>
            <person name="Koga H."/>
        </authorList>
    </citation>
    <scope>NUCLEOTIDE SEQUENCE [LARGE SCALE MRNA] (ISOFORM 1)</scope>
    <source>
        <tissue>Embryonic tail</tissue>
    </source>
</reference>
<reference key="3">
    <citation type="journal article" date="2005" name="Science">
        <title>The transcriptional landscape of the mammalian genome.</title>
        <authorList>
            <person name="Carninci P."/>
            <person name="Kasukawa T."/>
            <person name="Katayama S."/>
            <person name="Gough J."/>
            <person name="Frith M.C."/>
            <person name="Maeda N."/>
            <person name="Oyama R."/>
            <person name="Ravasi T."/>
            <person name="Lenhard B."/>
            <person name="Wells C."/>
            <person name="Kodzius R."/>
            <person name="Shimokawa K."/>
            <person name="Bajic V.B."/>
            <person name="Brenner S.E."/>
            <person name="Batalov S."/>
            <person name="Forrest A.R."/>
            <person name="Zavolan M."/>
            <person name="Davis M.J."/>
            <person name="Wilming L.G."/>
            <person name="Aidinis V."/>
            <person name="Allen J.E."/>
            <person name="Ambesi-Impiombato A."/>
            <person name="Apweiler R."/>
            <person name="Aturaliya R.N."/>
            <person name="Bailey T.L."/>
            <person name="Bansal M."/>
            <person name="Baxter L."/>
            <person name="Beisel K.W."/>
            <person name="Bersano T."/>
            <person name="Bono H."/>
            <person name="Chalk A.M."/>
            <person name="Chiu K.P."/>
            <person name="Choudhary V."/>
            <person name="Christoffels A."/>
            <person name="Clutterbuck D.R."/>
            <person name="Crowe M.L."/>
            <person name="Dalla E."/>
            <person name="Dalrymple B.P."/>
            <person name="de Bono B."/>
            <person name="Della Gatta G."/>
            <person name="di Bernardo D."/>
            <person name="Down T."/>
            <person name="Engstrom P."/>
            <person name="Fagiolini M."/>
            <person name="Faulkner G."/>
            <person name="Fletcher C.F."/>
            <person name="Fukushima T."/>
            <person name="Furuno M."/>
            <person name="Futaki S."/>
            <person name="Gariboldi M."/>
            <person name="Georgii-Hemming P."/>
            <person name="Gingeras T.R."/>
            <person name="Gojobori T."/>
            <person name="Green R.E."/>
            <person name="Gustincich S."/>
            <person name="Harbers M."/>
            <person name="Hayashi Y."/>
            <person name="Hensch T.K."/>
            <person name="Hirokawa N."/>
            <person name="Hill D."/>
            <person name="Huminiecki L."/>
            <person name="Iacono M."/>
            <person name="Ikeo K."/>
            <person name="Iwama A."/>
            <person name="Ishikawa T."/>
            <person name="Jakt M."/>
            <person name="Kanapin A."/>
            <person name="Katoh M."/>
            <person name="Kawasawa Y."/>
            <person name="Kelso J."/>
            <person name="Kitamura H."/>
            <person name="Kitano H."/>
            <person name="Kollias G."/>
            <person name="Krishnan S.P."/>
            <person name="Kruger A."/>
            <person name="Kummerfeld S.K."/>
            <person name="Kurochkin I.V."/>
            <person name="Lareau L.F."/>
            <person name="Lazarevic D."/>
            <person name="Lipovich L."/>
            <person name="Liu J."/>
            <person name="Liuni S."/>
            <person name="McWilliam S."/>
            <person name="Madan Babu M."/>
            <person name="Madera M."/>
            <person name="Marchionni L."/>
            <person name="Matsuda H."/>
            <person name="Matsuzawa S."/>
            <person name="Miki H."/>
            <person name="Mignone F."/>
            <person name="Miyake S."/>
            <person name="Morris K."/>
            <person name="Mottagui-Tabar S."/>
            <person name="Mulder N."/>
            <person name="Nakano N."/>
            <person name="Nakauchi H."/>
            <person name="Ng P."/>
            <person name="Nilsson R."/>
            <person name="Nishiguchi S."/>
            <person name="Nishikawa S."/>
            <person name="Nori F."/>
            <person name="Ohara O."/>
            <person name="Okazaki Y."/>
            <person name="Orlando V."/>
            <person name="Pang K.C."/>
            <person name="Pavan W.J."/>
            <person name="Pavesi G."/>
            <person name="Pesole G."/>
            <person name="Petrovsky N."/>
            <person name="Piazza S."/>
            <person name="Reed J."/>
            <person name="Reid J.F."/>
            <person name="Ring B.Z."/>
            <person name="Ringwald M."/>
            <person name="Rost B."/>
            <person name="Ruan Y."/>
            <person name="Salzberg S.L."/>
            <person name="Sandelin A."/>
            <person name="Schneider C."/>
            <person name="Schoenbach C."/>
            <person name="Sekiguchi K."/>
            <person name="Semple C.A."/>
            <person name="Seno S."/>
            <person name="Sessa L."/>
            <person name="Sheng Y."/>
            <person name="Shibata Y."/>
            <person name="Shimada H."/>
            <person name="Shimada K."/>
            <person name="Silva D."/>
            <person name="Sinclair B."/>
            <person name="Sperling S."/>
            <person name="Stupka E."/>
            <person name="Sugiura K."/>
            <person name="Sultana R."/>
            <person name="Takenaka Y."/>
            <person name="Taki K."/>
            <person name="Tammoja K."/>
            <person name="Tan S.L."/>
            <person name="Tang S."/>
            <person name="Taylor M.S."/>
            <person name="Tegner J."/>
            <person name="Teichmann S.A."/>
            <person name="Ueda H.R."/>
            <person name="van Nimwegen E."/>
            <person name="Verardo R."/>
            <person name="Wei C.L."/>
            <person name="Yagi K."/>
            <person name="Yamanishi H."/>
            <person name="Zabarovsky E."/>
            <person name="Zhu S."/>
            <person name="Zimmer A."/>
            <person name="Hide W."/>
            <person name="Bult C."/>
            <person name="Grimmond S.M."/>
            <person name="Teasdale R.D."/>
            <person name="Liu E.T."/>
            <person name="Brusic V."/>
            <person name="Quackenbush J."/>
            <person name="Wahlestedt C."/>
            <person name="Mattick J.S."/>
            <person name="Hume D.A."/>
            <person name="Kai C."/>
            <person name="Sasaki D."/>
            <person name="Tomaru Y."/>
            <person name="Fukuda S."/>
            <person name="Kanamori-Katayama M."/>
            <person name="Suzuki M."/>
            <person name="Aoki J."/>
            <person name="Arakawa T."/>
            <person name="Iida J."/>
            <person name="Imamura K."/>
            <person name="Itoh M."/>
            <person name="Kato T."/>
            <person name="Kawaji H."/>
            <person name="Kawagashira N."/>
            <person name="Kawashima T."/>
            <person name="Kojima M."/>
            <person name="Kondo S."/>
            <person name="Konno H."/>
            <person name="Nakano K."/>
            <person name="Ninomiya N."/>
            <person name="Nishio T."/>
            <person name="Okada M."/>
            <person name="Plessy C."/>
            <person name="Shibata K."/>
            <person name="Shiraki T."/>
            <person name="Suzuki S."/>
            <person name="Tagami M."/>
            <person name="Waki K."/>
            <person name="Watahiki A."/>
            <person name="Okamura-Oho Y."/>
            <person name="Suzuki H."/>
            <person name="Kawai J."/>
            <person name="Hayashizaki Y."/>
        </authorList>
    </citation>
    <scope>NUCLEOTIDE SEQUENCE [LARGE SCALE MRNA] (ISOFORM 2)</scope>
    <scope>NUCLEOTIDE SEQUENCE [LARGE SCALE MRNA] OF 1-1079 (ISOFORM 1)</scope>
    <source>
        <strain>C57BL/6J</strain>
        <strain>NOD</strain>
        <tissue>Bone marrow</tissue>
        <tissue>Dendritic cell</tissue>
    </source>
</reference>
<reference key="4">
    <citation type="journal article" date="2001" name="J. Biol. Chem.">
        <title>A dominant negative mutant of the KCC1 K-Cl cotransporter: both N- and C-terminal cytoplasmic domains are required for K-Cl cotransport activity.</title>
        <authorList>
            <person name="Casula S."/>
            <person name="Shmukler B.E."/>
            <person name="Wilhelm S."/>
            <person name="Stuart-Tilley A.K."/>
            <person name="Su W."/>
            <person name="Chernova M.N."/>
            <person name="Brugnara C."/>
            <person name="Alper S.L."/>
        </authorList>
    </citation>
    <scope>SUBUNIT</scope>
    <scope>FUNCTION</scope>
    <scope>TRANSPORTER ACTIVITY</scope>
</reference>
<reference key="5">
    <citation type="journal article" date="2002" name="Brain Res. Mol. Brain Res.">
        <title>Molecular, functional, and genomic characterization of human KCC2, the neuronal K-Cl cotransporter.</title>
        <authorList>
            <person name="Song L."/>
            <person name="Mercado A."/>
            <person name="Vazquez N."/>
            <person name="Xie Q."/>
            <person name="Desai R."/>
            <person name="George A.L. Jr."/>
            <person name="Gamba G."/>
            <person name="Mount D.B."/>
        </authorList>
    </citation>
    <scope>FUNCTION</scope>
    <scope>TRANSPORTER ACTIVITY</scope>
    <source>
        <tissue>Brain</tissue>
    </source>
</reference>
<reference key="6">
    <citation type="journal article" date="2002" name="Nature">
        <title>Deafness and renal tubular acidosis in mice lacking the K-Cl co-transporter Kcc4.</title>
        <authorList>
            <person name="Boettger T."/>
            <person name="Huebner C.A."/>
            <person name="Maier H."/>
            <person name="Rust M.B."/>
            <person name="Beck F.X."/>
            <person name="Jentsch T.J."/>
        </authorList>
    </citation>
    <scope>FUNCTION</scope>
    <scope>DISEASE</scope>
    <scope>TISSUE SPECIFICITY</scope>
    <scope>DEVELOPMENTAL STAGE</scope>
</reference>
<reference key="7">
    <citation type="journal article" date="2007" name="Proc. Natl. Acad. Sci. U.S.A.">
        <title>Large-scale phosphorylation analysis of mouse liver.</title>
        <authorList>
            <person name="Villen J."/>
            <person name="Beausoleil S.A."/>
            <person name="Gerber S.A."/>
            <person name="Gygi S.P."/>
        </authorList>
    </citation>
    <scope>PHOSPHORYLATION [LARGE SCALE ANALYSIS] AT SER-50</scope>
    <scope>IDENTIFICATION BY MASS SPECTROMETRY [LARGE SCALE ANALYSIS]</scope>
    <source>
        <tissue>Liver</tissue>
    </source>
</reference>
<reference key="8">
    <citation type="journal article" date="2009" name="Immunity">
        <title>The phagosomal proteome in interferon-gamma-activated macrophages.</title>
        <authorList>
            <person name="Trost M."/>
            <person name="English L."/>
            <person name="Lemieux S."/>
            <person name="Courcelles M."/>
            <person name="Desjardins M."/>
            <person name="Thibault P."/>
        </authorList>
    </citation>
    <scope>PHOSPHORYLATION [LARGE SCALE ANALYSIS] AT SER-30; SER-33; THR-37 AND SER-50</scope>
    <scope>IDENTIFICATION BY MASS SPECTROMETRY [LARGE SCALE ANALYSIS]</scope>
</reference>
<reference key="9">
    <citation type="journal article" date="2009" name="Mol. Cell. Proteomics">
        <title>The mouse C2C12 myoblast cell surface N-linked glycoproteome: identification, glycosite occupancy, and membrane orientation.</title>
        <authorList>
            <person name="Gundry R.L."/>
            <person name="Raginski K."/>
            <person name="Tarasova Y."/>
            <person name="Tchernyshyov I."/>
            <person name="Bausch-Fluck D."/>
            <person name="Elliott S.T."/>
            <person name="Boheler K.R."/>
            <person name="Van Eyk J.E."/>
            <person name="Wollscheid B."/>
        </authorList>
    </citation>
    <scope>GLYCOSYLATION [LARGE SCALE ANALYSIS] AT ASN-331</scope>
    <source>
        <tissue>Myoblast</tissue>
    </source>
</reference>
<reference key="10">
    <citation type="journal article" date="2009" name="Nat. Biotechnol.">
        <title>Mass-spectrometric identification and relative quantification of N-linked cell surface glycoproteins.</title>
        <authorList>
            <person name="Wollscheid B."/>
            <person name="Bausch-Fluck D."/>
            <person name="Henderson C."/>
            <person name="O'Brien R."/>
            <person name="Bibel M."/>
            <person name="Schiess R."/>
            <person name="Aebersold R."/>
            <person name="Watts J.D."/>
        </authorList>
    </citation>
    <scope>GLYCOSYLATION [LARGE SCALE ANALYSIS] AT ASN-331</scope>
</reference>
<reference key="11">
    <citation type="journal article" date="2010" name="Cell">
        <title>A tissue-specific atlas of mouse protein phosphorylation and expression.</title>
        <authorList>
            <person name="Huttlin E.L."/>
            <person name="Jedrychowski M.P."/>
            <person name="Elias J.E."/>
            <person name="Goswami T."/>
            <person name="Rad R."/>
            <person name="Beausoleil S.A."/>
            <person name="Villen J."/>
            <person name="Haas W."/>
            <person name="Sowa M.E."/>
            <person name="Gygi S.P."/>
        </authorList>
    </citation>
    <scope>PHOSPHORYLATION [LARGE SCALE ANALYSIS] AT SER-50; THR-973 AND THR-980</scope>
    <scope>IDENTIFICATION BY MASS SPECTROMETRY [LARGE SCALE ANALYSIS]</scope>
    <source>
        <tissue>Brown adipose tissue</tissue>
        <tissue>Heart</tissue>
        <tissue>Kidney</tissue>
        <tissue>Liver</tissue>
        <tissue>Lung</tissue>
        <tissue>Spleen</tissue>
        <tissue>Testis</tissue>
    </source>
</reference>
<reference key="12">
    <citation type="journal article" date="2013" name="Biochim. Biophys. Acta">
        <title>Glycosylation regulates the function and membrane localization of KCC4.</title>
        <authorList>
            <person name="Weng T.Y."/>
            <person name="Chiu W.T."/>
            <person name="Liu H.S."/>
            <person name="Cheng H.C."/>
            <person name="Shen M.R."/>
            <person name="Mount D.B."/>
            <person name="Chou C.Y."/>
        </authorList>
    </citation>
    <scope>SUBCELLULAR LOCATION</scope>
    <scope>GLYCOSYLATION AT ASN-312; ASN-331; ASN-344 AND ASN-360</scope>
</reference>
<name>S12A7_MOUSE</name>
<dbReference type="EMBL" id="AF087436">
    <property type="protein sequence ID" value="AAD38328.1"/>
    <property type="molecule type" value="mRNA"/>
</dbReference>
<dbReference type="EMBL" id="AK131129">
    <property type="protein sequence ID" value="BAD21379.1"/>
    <property type="status" value="ALT_INIT"/>
    <property type="molecule type" value="mRNA"/>
</dbReference>
<dbReference type="EMBL" id="AK149750">
    <property type="protein sequence ID" value="BAE29061.1"/>
    <property type="molecule type" value="mRNA"/>
</dbReference>
<dbReference type="EMBL" id="AK169950">
    <property type="protein sequence ID" value="BAE41477.1"/>
    <property type="molecule type" value="mRNA"/>
</dbReference>
<dbReference type="EMBL" id="AK171498">
    <property type="protein sequence ID" value="BAE42491.1"/>
    <property type="status" value="ALT_FRAME"/>
    <property type="molecule type" value="mRNA"/>
</dbReference>
<dbReference type="CCDS" id="CCDS26635.1">
    <molecule id="Q9WVL3-1"/>
</dbReference>
<dbReference type="RefSeq" id="NP_035520.1">
    <molecule id="Q9WVL3-1"/>
    <property type="nucleotide sequence ID" value="NM_011390.2"/>
</dbReference>
<dbReference type="PDB" id="6UKN">
    <property type="method" value="EM"/>
    <property type="resolution" value="3.65 A"/>
    <property type="chains" value="A=1-1083"/>
</dbReference>
<dbReference type="PDBsum" id="6UKN"/>
<dbReference type="EMDB" id="EMD-20807"/>
<dbReference type="SMR" id="Q9WVL3"/>
<dbReference type="BioGRID" id="203280">
    <property type="interactions" value="3"/>
</dbReference>
<dbReference type="FunCoup" id="Q9WVL3">
    <property type="interactions" value="131"/>
</dbReference>
<dbReference type="STRING" id="10090.ENSMUSP00000017900"/>
<dbReference type="GlyCosmos" id="Q9WVL3">
    <property type="glycosylation" value="4 sites, No reported glycans"/>
</dbReference>
<dbReference type="GlyGen" id="Q9WVL3">
    <property type="glycosylation" value="9 sites, 2 N-linked glycans (2 sites), 1 O-linked glycan (2 sites)"/>
</dbReference>
<dbReference type="iPTMnet" id="Q9WVL3"/>
<dbReference type="PhosphoSitePlus" id="Q9WVL3"/>
<dbReference type="jPOST" id="Q9WVL3"/>
<dbReference type="PaxDb" id="10090-ENSMUSP00000017900"/>
<dbReference type="PeptideAtlas" id="Q9WVL3"/>
<dbReference type="ProteomicsDB" id="255439">
    <molecule id="Q9WVL3-1"/>
</dbReference>
<dbReference type="ProteomicsDB" id="255440">
    <molecule id="Q9WVL3-2"/>
</dbReference>
<dbReference type="Pumba" id="Q9WVL3"/>
<dbReference type="Antibodypedia" id="22300">
    <property type="antibodies" value="224 antibodies from 30 providers"/>
</dbReference>
<dbReference type="DNASU" id="20499"/>
<dbReference type="Ensembl" id="ENSMUST00000017900.9">
    <molecule id="Q9WVL3-1"/>
    <property type="protein sequence ID" value="ENSMUSP00000017900.8"/>
    <property type="gene ID" value="ENSMUSG00000017756.10"/>
</dbReference>
<dbReference type="GeneID" id="20499"/>
<dbReference type="KEGG" id="mmu:20499"/>
<dbReference type="UCSC" id="uc007reb.1">
    <molecule id="Q9WVL3-2"/>
    <property type="organism name" value="mouse"/>
</dbReference>
<dbReference type="UCSC" id="uc007rec.1">
    <molecule id="Q9WVL3-1"/>
    <property type="organism name" value="mouse"/>
</dbReference>
<dbReference type="AGR" id="MGI:1342283"/>
<dbReference type="CTD" id="10723"/>
<dbReference type="MGI" id="MGI:1342283">
    <property type="gene designation" value="Slc12a7"/>
</dbReference>
<dbReference type="VEuPathDB" id="HostDB:ENSMUSG00000017756"/>
<dbReference type="eggNOG" id="KOG2082">
    <property type="taxonomic scope" value="Eukaryota"/>
</dbReference>
<dbReference type="GeneTree" id="ENSGT00940000157657"/>
<dbReference type="HOGENOM" id="CLU_001883_1_2_1"/>
<dbReference type="InParanoid" id="Q9WVL3"/>
<dbReference type="OMA" id="ICEMGIL"/>
<dbReference type="PhylomeDB" id="Q9WVL3"/>
<dbReference type="TreeFam" id="TF313657"/>
<dbReference type="Reactome" id="R-MMU-426117">
    <property type="pathway name" value="Cation-coupled Chloride cotransporters"/>
</dbReference>
<dbReference type="BioGRID-ORCS" id="20499">
    <property type="hits" value="3 hits in 79 CRISPR screens"/>
</dbReference>
<dbReference type="ChiTaRS" id="Slc12a7">
    <property type="organism name" value="mouse"/>
</dbReference>
<dbReference type="PRO" id="PR:Q9WVL3"/>
<dbReference type="Proteomes" id="UP000000589">
    <property type="component" value="Chromosome 13"/>
</dbReference>
<dbReference type="RNAct" id="Q9WVL3">
    <property type="molecule type" value="protein"/>
</dbReference>
<dbReference type="Bgee" id="ENSMUSG00000017756">
    <property type="expression patterns" value="Expressed in vestibular membrane of cochlear duct and 221 other cell types or tissues"/>
</dbReference>
<dbReference type="ExpressionAtlas" id="Q9WVL3">
    <property type="expression patterns" value="baseline and differential"/>
</dbReference>
<dbReference type="GO" id="GO:0005886">
    <property type="term" value="C:plasma membrane"/>
    <property type="evidence" value="ECO:0000315"/>
    <property type="project" value="MGI"/>
</dbReference>
<dbReference type="GO" id="GO:0032991">
    <property type="term" value="C:protein-containing complex"/>
    <property type="evidence" value="ECO:0000266"/>
    <property type="project" value="MGI"/>
</dbReference>
<dbReference type="GO" id="GO:0015377">
    <property type="term" value="F:chloride:monoatomic cation symporter activity"/>
    <property type="evidence" value="ECO:0000315"/>
    <property type="project" value="MGI"/>
</dbReference>
<dbReference type="GO" id="GO:0046872">
    <property type="term" value="F:metal ion binding"/>
    <property type="evidence" value="ECO:0007669"/>
    <property type="project" value="UniProtKB-KW"/>
</dbReference>
<dbReference type="GO" id="GO:0015379">
    <property type="term" value="F:potassium:chloride symporter activity"/>
    <property type="evidence" value="ECO:0000314"/>
    <property type="project" value="UniProtKB"/>
</dbReference>
<dbReference type="GO" id="GO:0019901">
    <property type="term" value="F:protein kinase binding"/>
    <property type="evidence" value="ECO:0007669"/>
    <property type="project" value="Ensembl"/>
</dbReference>
<dbReference type="GO" id="GO:0071333">
    <property type="term" value="P:cellular response to glucose stimulus"/>
    <property type="evidence" value="ECO:0000314"/>
    <property type="project" value="MGI"/>
</dbReference>
<dbReference type="GO" id="GO:1902476">
    <property type="term" value="P:chloride transmembrane transport"/>
    <property type="evidence" value="ECO:0000315"/>
    <property type="project" value="MGI"/>
</dbReference>
<dbReference type="GO" id="GO:1990573">
    <property type="term" value="P:potassium ion import across plasma membrane"/>
    <property type="evidence" value="ECO:0000314"/>
    <property type="project" value="ARUK-UCL"/>
</dbReference>
<dbReference type="GO" id="GO:0071805">
    <property type="term" value="P:potassium ion transmembrane transport"/>
    <property type="evidence" value="ECO:0000314"/>
    <property type="project" value="UniProtKB"/>
</dbReference>
<dbReference type="FunFam" id="1.20.1740.10:FF:000049">
    <property type="entry name" value="Solute carrier family 12 (potassium/chloride transporter), member 4"/>
    <property type="match status" value="1"/>
</dbReference>
<dbReference type="FunFam" id="1.20.1740.10:FF:000040">
    <property type="entry name" value="Solute carrier family 12 member 6"/>
    <property type="match status" value="1"/>
</dbReference>
<dbReference type="Gene3D" id="1.20.1740.10">
    <property type="entry name" value="Amino acid/polyamine transporter I"/>
    <property type="match status" value="1"/>
</dbReference>
<dbReference type="InterPro" id="IPR004841">
    <property type="entry name" value="AA-permease/SLC12A_dom"/>
</dbReference>
<dbReference type="InterPro" id="IPR000076">
    <property type="entry name" value="KCL_cotranspt"/>
</dbReference>
<dbReference type="InterPro" id="IPR018491">
    <property type="entry name" value="SLC12_C"/>
</dbReference>
<dbReference type="InterPro" id="IPR004842">
    <property type="entry name" value="SLC12A_fam"/>
</dbReference>
<dbReference type="NCBIfam" id="TIGR00930">
    <property type="entry name" value="2a30"/>
    <property type="match status" value="1"/>
</dbReference>
<dbReference type="PANTHER" id="PTHR11827:SF47">
    <property type="entry name" value="SOLUTE CARRIER FAMILY 12 MEMBER 7"/>
    <property type="match status" value="1"/>
</dbReference>
<dbReference type="PANTHER" id="PTHR11827">
    <property type="entry name" value="SOLUTE CARRIER FAMILY 12, CATION COTRANSPORTERS"/>
    <property type="match status" value="1"/>
</dbReference>
<dbReference type="Pfam" id="PF00324">
    <property type="entry name" value="AA_permease"/>
    <property type="match status" value="2"/>
</dbReference>
<dbReference type="Pfam" id="PF03522">
    <property type="entry name" value="SLC12"/>
    <property type="match status" value="2"/>
</dbReference>
<dbReference type="PRINTS" id="PR01081">
    <property type="entry name" value="KCLTRNSPORT"/>
</dbReference>
<gene>
    <name type="primary">Slc12a7</name>
    <name evidence="10" type="synonym">Kcc4</name>
</gene>
<accession>Q9WVL3</accession>
<accession>Q3TB23</accession>
<accession>Q3TDX1</accession>
<accession>Q3UE50</accession>
<accession>Q6KAS8</accession>
<feature type="chain" id="PRO_0000178040" description="Solute carrier family 12 member 7">
    <location>
        <begin position="1"/>
        <end position="1083"/>
    </location>
</feature>
<feature type="topological domain" description="Cytoplasmic" evidence="12">
    <location>
        <begin position="1"/>
        <end position="119"/>
    </location>
</feature>
<feature type="transmembrane region" description="Discontinuously helical; Name=1" evidence="1">
    <location>
        <begin position="120"/>
        <end position="142"/>
    </location>
</feature>
<feature type="topological domain" description="Extracellular" evidence="12">
    <location>
        <begin position="143"/>
        <end position="149"/>
    </location>
</feature>
<feature type="transmembrane region" description="Helical; Name=2" evidence="1">
    <location>
        <begin position="150"/>
        <end position="172"/>
    </location>
</feature>
<feature type="topological domain" description="Cytoplasmic" evidence="12">
    <location>
        <begin position="173"/>
        <end position="196"/>
    </location>
</feature>
<feature type="transmembrane region" description="Helical; Name=3" evidence="1">
    <location>
        <begin position="197"/>
        <end position="225"/>
    </location>
</feature>
<feature type="topological domain" description="Extracellular" evidence="12">
    <location>
        <begin position="226"/>
        <end position="249"/>
    </location>
</feature>
<feature type="transmembrane region" description="Helical; Name=4" evidence="1">
    <location>
        <begin position="250"/>
        <end position="271"/>
    </location>
</feature>
<feature type="transmembrane region" description="Helical; Name=5" evidence="1">
    <location>
        <begin position="272"/>
        <end position="300"/>
    </location>
</feature>
<feature type="topological domain" description="Extracellular" evidence="12">
    <location>
        <begin position="301"/>
        <end position="419"/>
    </location>
</feature>
<feature type="transmembrane region" description="Helical; Name=6" evidence="1">
    <location>
        <begin position="420"/>
        <end position="440"/>
    </location>
</feature>
<feature type="topological domain" description="Cytoplasmic" evidence="12">
    <location>
        <begin position="441"/>
        <end position="450"/>
    </location>
</feature>
<feature type="transmembrane region" description="Helical; Name=7" evidence="1">
    <location>
        <begin position="451"/>
        <end position="473"/>
    </location>
</feature>
<feature type="topological domain" description="Extracellular" evidence="12">
    <location>
        <begin position="474"/>
        <end position="504"/>
    </location>
</feature>
<feature type="transmembrane region" description="Helical; Name=8" evidence="1">
    <location>
        <begin position="505"/>
        <end position="531"/>
    </location>
</feature>
<feature type="topological domain" description="Cytoplasmic" evidence="12">
    <location>
        <begin position="532"/>
        <end position="554"/>
    </location>
</feature>
<feature type="transmembrane region" description="Helical; Name=9" evidence="1">
    <location>
        <begin position="555"/>
        <end position="573"/>
    </location>
</feature>
<feature type="transmembrane region" description="Helical; Name=10" evidence="1">
    <location>
        <begin position="574"/>
        <end position="598"/>
    </location>
</feature>
<feature type="topological domain" description="Cytoplasmic" evidence="12">
    <location>
        <begin position="599"/>
        <end position="612"/>
    </location>
</feature>
<feature type="transmembrane region" description="Helical; Name=11" evidence="1">
    <location>
        <begin position="613"/>
        <end position="635"/>
    </location>
</feature>
<feature type="transmembrane region" description="Helical; Name=12" evidence="1">
    <location>
        <begin position="636"/>
        <end position="651"/>
    </location>
</feature>
<feature type="topological domain" description="Cytoplasmic" evidence="12">
    <location>
        <begin position="652"/>
        <end position="1083"/>
    </location>
</feature>
<feature type="region of interest" description="Disordered" evidence="2">
    <location>
        <begin position="1"/>
        <end position="55"/>
    </location>
</feature>
<feature type="region of interest" description="Scissor helix" evidence="1">
    <location>
        <begin position="664"/>
        <end position="680"/>
    </location>
</feature>
<feature type="compositionally biased region" description="Basic and acidic residues" evidence="2">
    <location>
        <begin position="12"/>
        <end position="27"/>
    </location>
</feature>
<feature type="binding site" evidence="1">
    <location>
        <position position="131"/>
    </location>
    <ligand>
        <name>K(+)</name>
        <dbReference type="ChEBI" id="CHEBI:29103"/>
    </ligand>
</feature>
<feature type="binding site" evidence="1">
    <location>
        <position position="132"/>
    </location>
    <ligand>
        <name>K(+)</name>
        <dbReference type="ChEBI" id="CHEBI:29103"/>
    </ligand>
</feature>
<feature type="binding site" evidence="1">
    <location>
        <position position="135"/>
    </location>
    <ligand>
        <name>chloride</name>
        <dbReference type="ChEBI" id="CHEBI:17996"/>
        <label>2</label>
    </ligand>
</feature>
<feature type="binding site" evidence="1">
    <location>
        <position position="429"/>
    </location>
    <ligand>
        <name>chloride</name>
        <dbReference type="ChEBI" id="CHEBI:17996"/>
        <label>2</label>
    </ligand>
</feature>
<feature type="binding site" evidence="1">
    <location>
        <position position="429"/>
    </location>
    <ligand>
        <name>K(+)</name>
        <dbReference type="ChEBI" id="CHEBI:29103"/>
    </ligand>
</feature>
<feature type="binding site" evidence="1">
    <location>
        <position position="432"/>
    </location>
    <ligand>
        <name>K(+)</name>
        <dbReference type="ChEBI" id="CHEBI:29103"/>
    </ligand>
</feature>
<feature type="binding site" evidence="1">
    <location>
        <position position="433"/>
    </location>
    <ligand>
        <name>chloride</name>
        <dbReference type="ChEBI" id="CHEBI:17996"/>
        <label>1</label>
    </ligand>
</feature>
<feature type="binding site" evidence="1">
    <location>
        <position position="434"/>
    </location>
    <ligand>
        <name>chloride</name>
        <dbReference type="ChEBI" id="CHEBI:17996"/>
        <label>1</label>
    </ligand>
</feature>
<feature type="binding site" evidence="1">
    <location>
        <position position="589"/>
    </location>
    <ligand>
        <name>chloride</name>
        <dbReference type="ChEBI" id="CHEBI:17996"/>
        <label>1</label>
    </ligand>
</feature>
<feature type="modified residue" description="Phosphoserine" evidence="14">
    <location>
        <position position="30"/>
    </location>
</feature>
<feature type="modified residue" description="Phosphoserine" evidence="14">
    <location>
        <position position="33"/>
    </location>
</feature>
<feature type="modified residue" description="Phosphothreonine" evidence="14">
    <location>
        <position position="37"/>
    </location>
</feature>
<feature type="modified residue" description="Phosphoserine" evidence="13 14 15">
    <location>
        <position position="50"/>
    </location>
</feature>
<feature type="modified residue" description="Phosphoserine" evidence="1">
    <location>
        <position position="62"/>
    </location>
</feature>
<feature type="modified residue" description="Phosphothreonine" evidence="15">
    <location>
        <position position="973"/>
    </location>
</feature>
<feature type="modified residue" description="Phosphothreonine" evidence="15">
    <location>
        <position position="980"/>
    </location>
</feature>
<feature type="glycosylation site" description="N-linked (GlcNAc...) (high mannose) asparagine" evidence="9">
    <location>
        <position position="312"/>
    </location>
</feature>
<feature type="glycosylation site" description="N-linked (GlcNAc...) (complex) asparagine" evidence="7 8 9">
    <location>
        <position position="331"/>
    </location>
</feature>
<feature type="glycosylation site" description="N-linked (GlcNAc...) (complex) asparagine" evidence="9">
    <location>
        <position position="344"/>
    </location>
</feature>
<feature type="glycosylation site" description="N-linked (GlcNAc...) (high mannose) asparagine" evidence="9">
    <location>
        <position position="360"/>
    </location>
</feature>
<feature type="splice variant" id="VSP_027770" description="In isoform 2." evidence="11">
    <original>DQSNVRRMHTAVKLNGVVLNKSQDAQLVLLNMPGPPKSRQGDENYMEFLEVLTEGLNRVLLVRGGGREVIT</original>
    <variation>LLHFMLFENRCWTKHTVIVPFPWSEFRVPVMKGLTGATETHL</variation>
    <location>
        <begin position="1010"/>
        <end position="1080"/>
    </location>
</feature>
<feature type="sequence conflict" description="In Ref. 3; BAE41477." evidence="12" ref="3">
    <original>T</original>
    <variation>M</variation>
    <location>
        <position position="40"/>
    </location>
</feature>
<feature type="sequence conflict" description="In Ref. 3; BAE41477." evidence="12" ref="3">
    <original>Y</original>
    <variation>F</variation>
    <location>
        <position position="355"/>
    </location>
</feature>
<feature type="sequence conflict" description="In Ref. 3; BAE29061." evidence="12" ref="3">
    <original>Q</original>
    <variation>P</variation>
    <location>
        <position position="951"/>
    </location>
</feature>
<comment type="function">
    <text evidence="4 5 6 12">Mediates electroneutral potassium-chloride cotransport when activated by cell swelling (PubMed:11551954, PubMed:12106695). May mediate K(+) uptake into Deiters' cells in the cochlea and contribute to K(+) recycling in the inner ear. Important for the survival of cochlear outer and inner hair cells and the maintenance of the organ of Corti (PubMed:11976689). May be required for basolateral Cl(-) extrusion in the kidney and contribute to renal acidification (Probable).</text>
</comment>
<comment type="catalytic activity">
    <reaction evidence="4 6">
        <text>K(+)(in) + chloride(in) = K(+)(out) + chloride(out)</text>
        <dbReference type="Rhea" id="RHEA:72427"/>
        <dbReference type="ChEBI" id="CHEBI:17996"/>
        <dbReference type="ChEBI" id="CHEBI:29103"/>
    </reaction>
</comment>
<comment type="activity regulation">
    <text evidence="1">Activated by N-ethylmaleimide (NEM). Inhibited by furosemide, DIDS and bumetanide. The inhibition is much stronger in the presence of 50 mM K(+) in the uptake medium. Inhibited by DIOA. Inhibited by WNK3.</text>
</comment>
<comment type="subunit">
    <text evidence="1">Homodimer; adopts a domain-swap conformation at the scissor helices connecting the transmembrane domain and C-terminal domain (By similarity). Heterodimer with K-Cl cotransporter SLC12A5 (By similarity).</text>
</comment>
<comment type="subcellular location">
    <subcellularLocation>
        <location evidence="9">Cell membrane</location>
        <topology evidence="9">Multi-pass membrane protein</topology>
    </subcellularLocation>
</comment>
<comment type="alternative products">
    <event type="alternative splicing"/>
    <isoform>
        <id>Q9WVL3-1</id>
        <name>1</name>
        <sequence type="displayed"/>
    </isoform>
    <isoform>
        <id>Q9WVL3-2</id>
        <name>2</name>
        <sequence type="described" ref="VSP_027770"/>
    </isoform>
</comment>
<comment type="tissue specificity">
    <text evidence="3 5">Detected in proximal tubules in the kidney, in particular in basolateral membranes of intercalated cells in the cortical collecting duct.</text>
</comment>
<comment type="developmental stage">
    <text evidence="5">In 8 day old mice, before the onset of hearing, detected in membranes of the stria vascularis and in most cells of the organ of Corti. At P14, when the organ of Corti has matured, expression is no longer detected in hair cells and the stria, but is restricted to Deiters' cells that are supporting outer hair cells and to phalangeal cells enveloping the inner hair cells.</text>
</comment>
<comment type="PTM">
    <text evidence="7 8 9">Glycosylation at Asn-331 and Asn-344 is required for proper trafficking to the cell surface, and augments protein stability.</text>
</comment>
<comment type="disease">
    <text evidence="5">Defects in Slc12a7 are a cause of deafness due to the progressive degeneration of outer and inner hair cells in the cochlea and of neurons in the cochlear ganglion, leading to the loss of the organ of Corti.</text>
</comment>
<comment type="similarity">
    <text evidence="12">Belongs to the SLC12A transporter family. K/Cl co-transporter subfamily.</text>
</comment>
<comment type="sequence caution" evidence="12">
    <conflict type="erroneous initiation">
        <sequence resource="EMBL-CDS" id="BAD21379"/>
    </conflict>
    <text>Extended N-terminus.</text>
</comment>
<comment type="sequence caution" evidence="12">
    <conflict type="frameshift">
        <sequence resource="EMBL-CDS" id="BAE42491"/>
    </conflict>
</comment>
<sequence>MPTNFTVVPVEARADGAGDEAAERTEEPESPESVDQTSPTPGDGNPRENSPFINNVEVERESYFEGKNMALFEEEMDSNPMVSSLLNKLANYTNLSQGVVEHEEDEDSRRREVKAPRMGTFIGVYLPCLQNILGVILFLRLTWIVGAAGVMESFLIVAMCCTCTMLTAISMSAIATNGVVPAGGSYYMISRSLGPEFGGAVGLCFYLGTTFAGAMYILGTIEIFLTYISPSAAIFQAETADGEAAALLNNMRVYGSCALALMAVVVFVGVKYVNKLALVFLACVVLSILAIYAGVIKTAFAPPDIPVCLLGNRTLANRNFDTCAKMQVVSNGTVTTALWRLFCNGSSLGATCDEYFAQNNVTEIQGIPGVASGVFLDNLWSTYSDKGAFVEKKGVSSVPVSEESRPGGLPYVLTDIMTYFTMLVGIYFPSVTGIMAGSNRSGDLKDAQKSIPTGTILAIVTTSFIYLSCIVLFGACIEGVVLRDKFGEALQGNLVIGMLAWPSPWVIVIGSFFSTCGAGLQSLTGAPRLLQAIARDGIIPFLQVFGHGKANGEPTWALLLTALICETGILIASLDSVAPILSMFFLMCYMFVNLACAVQTLLRTPNWRPRFKFYHWTLSFLGMSLCLALMFICSWYYALFAMLIAGCIYKYIEYRGAEKEWGDGIRGLSLNAARYALLRVEHGPPHTKNWRPQVLVMLNLDSEQCVKHPRLLSFTSQLKAGKGLTIVGSVLEGTYLDKHVEAQRAEENIRSLMSAEKTKGFCQLVVSSNLRDGASHLIQSAGLGGMKHNTVLMAWPEAWKEADNPFSWKNFVDTVRDTTAAHQALLVAKNIDLFPQNQERFSDGNIDVWWIVHDGGMLMLLPFLLRQHKVWRKCRMRIFTVAQVDDNSIQMKKDLQMFLYHLRISAEVEVVEMVENDISAFTYEKTLMMEQRSQMLKQMQLSKNEREREAQLIHDRNTASHTTATARTQAPPTPDKVQMTWTKEKLIAEKHRNKDTGPSGFKDLFSLKPDQSNVRRMHTAVKLNGVVLNKSQDAQLVLLNMPGPPKSRQGDENYMEFLEVLTEGLNRVLLVRGGGREVITIYS</sequence>